<accession>Q99405</accession>
<accession>Q5WK05</accession>
<dbReference type="EC" id="3.4.21.-" evidence="4"/>
<dbReference type="EMBL" id="AP006627">
    <property type="protein sequence ID" value="BAD63300.1"/>
    <property type="molecule type" value="Genomic_DNA"/>
</dbReference>
<dbReference type="RefSeq" id="WP_011245616.1">
    <property type="nucleotide sequence ID" value="NC_006582.1"/>
</dbReference>
<dbReference type="PDB" id="1MPT">
    <property type="method" value="X-ray"/>
    <property type="resolution" value="2.40 A"/>
    <property type="chains" value="A=112-380"/>
</dbReference>
<dbReference type="PDB" id="1WSD">
    <property type="method" value="X-ray"/>
    <property type="resolution" value="1.50 A"/>
    <property type="chains" value="A=112-380"/>
</dbReference>
<dbReference type="PDBsum" id="1MPT"/>
<dbReference type="PDBsum" id="1WSD"/>
<dbReference type="SMR" id="Q99405"/>
<dbReference type="STRING" id="66692.ABC0761"/>
<dbReference type="MEROPS" id="S08.010"/>
<dbReference type="KEGG" id="bcl:ABC0761"/>
<dbReference type="eggNOG" id="COG1404">
    <property type="taxonomic scope" value="Bacteria"/>
</dbReference>
<dbReference type="HOGENOM" id="CLU_011263_15_7_9"/>
<dbReference type="OrthoDB" id="9798386at2"/>
<dbReference type="EvolutionaryTrace" id="Q99405"/>
<dbReference type="Proteomes" id="UP000001168">
    <property type="component" value="Chromosome"/>
</dbReference>
<dbReference type="GO" id="GO:0005576">
    <property type="term" value="C:extracellular region"/>
    <property type="evidence" value="ECO:0007669"/>
    <property type="project" value="UniProtKB-SubCell"/>
</dbReference>
<dbReference type="GO" id="GO:0046872">
    <property type="term" value="F:metal ion binding"/>
    <property type="evidence" value="ECO:0007669"/>
    <property type="project" value="UniProtKB-KW"/>
</dbReference>
<dbReference type="GO" id="GO:0004252">
    <property type="term" value="F:serine-type endopeptidase activity"/>
    <property type="evidence" value="ECO:0007669"/>
    <property type="project" value="InterPro"/>
</dbReference>
<dbReference type="GO" id="GO:0006508">
    <property type="term" value="P:proteolysis"/>
    <property type="evidence" value="ECO:0007669"/>
    <property type="project" value="UniProtKB-KW"/>
</dbReference>
<dbReference type="CDD" id="cd07477">
    <property type="entry name" value="Peptidases_S8_Subtilisin_subset"/>
    <property type="match status" value="1"/>
</dbReference>
<dbReference type="Gene3D" id="3.30.70.80">
    <property type="entry name" value="Peptidase S8 propeptide/proteinase inhibitor I9"/>
    <property type="match status" value="1"/>
</dbReference>
<dbReference type="Gene3D" id="3.40.50.200">
    <property type="entry name" value="Peptidase S8/S53 domain"/>
    <property type="match status" value="1"/>
</dbReference>
<dbReference type="InterPro" id="IPR000209">
    <property type="entry name" value="Peptidase_S8/S53_dom"/>
</dbReference>
<dbReference type="InterPro" id="IPR036852">
    <property type="entry name" value="Peptidase_S8/S53_dom_sf"/>
</dbReference>
<dbReference type="InterPro" id="IPR023827">
    <property type="entry name" value="Peptidase_S8_Asp-AS"/>
</dbReference>
<dbReference type="InterPro" id="IPR022398">
    <property type="entry name" value="Peptidase_S8_His-AS"/>
</dbReference>
<dbReference type="InterPro" id="IPR023828">
    <property type="entry name" value="Peptidase_S8_Ser-AS"/>
</dbReference>
<dbReference type="InterPro" id="IPR050131">
    <property type="entry name" value="Peptidase_S8_subtilisin-like"/>
</dbReference>
<dbReference type="InterPro" id="IPR015500">
    <property type="entry name" value="Peptidase_S8_subtilisin-rel"/>
</dbReference>
<dbReference type="InterPro" id="IPR010259">
    <property type="entry name" value="S8pro/Inhibitor_I9"/>
</dbReference>
<dbReference type="InterPro" id="IPR037045">
    <property type="entry name" value="S8pro/Inhibitor_I9_sf"/>
</dbReference>
<dbReference type="InterPro" id="IPR034202">
    <property type="entry name" value="Subtilisin_Carlsberg-like"/>
</dbReference>
<dbReference type="PANTHER" id="PTHR43806:SF11">
    <property type="entry name" value="CEREVISIN-RELATED"/>
    <property type="match status" value="1"/>
</dbReference>
<dbReference type="PANTHER" id="PTHR43806">
    <property type="entry name" value="PEPTIDASE S8"/>
    <property type="match status" value="1"/>
</dbReference>
<dbReference type="Pfam" id="PF05922">
    <property type="entry name" value="Inhibitor_I9"/>
    <property type="match status" value="1"/>
</dbReference>
<dbReference type="Pfam" id="PF00082">
    <property type="entry name" value="Peptidase_S8"/>
    <property type="match status" value="1"/>
</dbReference>
<dbReference type="PRINTS" id="PR00723">
    <property type="entry name" value="SUBTILISIN"/>
</dbReference>
<dbReference type="SUPFAM" id="SSF54897">
    <property type="entry name" value="Protease propeptides/inhibitors"/>
    <property type="match status" value="1"/>
</dbReference>
<dbReference type="SUPFAM" id="SSF52743">
    <property type="entry name" value="Subtilisin-like"/>
    <property type="match status" value="1"/>
</dbReference>
<dbReference type="PROSITE" id="PS51892">
    <property type="entry name" value="SUBTILASE"/>
    <property type="match status" value="1"/>
</dbReference>
<dbReference type="PROSITE" id="PS00136">
    <property type="entry name" value="SUBTILASE_ASP"/>
    <property type="match status" value="1"/>
</dbReference>
<dbReference type="PROSITE" id="PS00137">
    <property type="entry name" value="SUBTILASE_HIS"/>
    <property type="match status" value="1"/>
</dbReference>
<dbReference type="PROSITE" id="PS00138">
    <property type="entry name" value="SUBTILASE_SER"/>
    <property type="match status" value="1"/>
</dbReference>
<protein>
    <recommendedName>
        <fullName evidence="5">M-protease</fullName>
        <ecNumber evidence="4">3.4.21.-</ecNumber>
    </recommendedName>
</protein>
<evidence type="ECO:0000255" key="1"/>
<evidence type="ECO:0000255" key="2">
    <source>
        <dbReference type="PROSITE-ProRule" id="PRU01240"/>
    </source>
</evidence>
<evidence type="ECO:0000269" key="3">
    <source>
    </source>
</evidence>
<evidence type="ECO:0000269" key="4">
    <source>
    </source>
</evidence>
<evidence type="ECO:0000303" key="5">
    <source>
    </source>
</evidence>
<evidence type="ECO:0000305" key="6"/>
<evidence type="ECO:0000305" key="7">
    <source>
    </source>
</evidence>
<evidence type="ECO:0007744" key="8">
    <source>
        <dbReference type="PDB" id="1MPT"/>
    </source>
</evidence>
<evidence type="ECO:0007744" key="9">
    <source>
        <dbReference type="PDB" id="1WSD"/>
    </source>
</evidence>
<evidence type="ECO:0007829" key="10">
    <source>
        <dbReference type="PDB" id="1WSD"/>
    </source>
</evidence>
<organism>
    <name type="scientific">Shouchella clausii (strain KSM-K16)</name>
    <name type="common">Alkalihalobacillus clausii</name>
    <dbReference type="NCBI Taxonomy" id="66692"/>
    <lineage>
        <taxon>Bacteria</taxon>
        <taxon>Bacillati</taxon>
        <taxon>Bacillota</taxon>
        <taxon>Bacilli</taxon>
        <taxon>Bacillales</taxon>
        <taxon>Bacillaceae</taxon>
        <taxon>Shouchella</taxon>
    </lineage>
</organism>
<sequence length="380" mass="38881">MKKPLGKIVASTALLISVAFSSSIASAAEEAKEKYLIGFNEQEAVSEFVEQIEANDDVAILSEEEEVEIELLHEFETIPVLSVELSPEDVDALELDPTISYIEEDAEVTTMAQSVPWGISRVQAPAAHNRGLTGSGVKVAVLDTGISTHPDLNIRGGASFVPGEPSTQDGNGHGTHVAGTIAALNNSIGVLGVAPSAELYAVKVLGASGSGSVSSIAQGLEWAGNNGMHVANLSLGSPSPSATLEQAVNSATSRGVLVVAASGNSGAGSISYPARYANAMAVGATDQNNNRASFSQYGAGLDIVAPGVNVQSTYPGSTYASLNGTSMATPHVAGVAALVKQKNPSWSNVQIRNHLKNTATGLGNTNLYGSGLVNAEAATR</sequence>
<reference key="1">
    <citation type="submission" date="2003-10" db="EMBL/GenBank/DDBJ databases">
        <title>The complete genome sequence of the alkaliphilic Bacillus clausii KSM-K16.</title>
        <authorList>
            <person name="Takaki Y."/>
            <person name="Kageyama Y."/>
            <person name="Shimamura S."/>
            <person name="Suzuki H."/>
            <person name="Nishi S."/>
            <person name="Hatada Y."/>
            <person name="Kawai S."/>
            <person name="Ito S."/>
            <person name="Horikoshi K."/>
        </authorList>
    </citation>
    <scope>NUCLEOTIDE SEQUENCE [LARGE SCALE GENOMIC DNA]</scope>
    <source>
        <strain>KSM-K16</strain>
    </source>
</reference>
<reference key="2">
    <citation type="journal article" date="1995" name="Appl. Microbiol. Biotechnol.">
        <title>Purification and properties of an alkaline protease from alkalophilic Bacillus sp. KSM-K16.</title>
        <authorList>
            <person name="Kobayashi T."/>
            <person name="Hakamada Y."/>
            <person name="Adachi S."/>
            <person name="Hitomi J."/>
            <person name="Yoshimatsu T."/>
            <person name="Koike K."/>
            <person name="Kawai S."/>
            <person name="Ito S."/>
        </authorList>
    </citation>
    <scope>PROTEIN SEQUENCE OF 112-134</scope>
    <scope>FUNCTION</scope>
    <scope>ACTIVITY REGULATION</scope>
    <scope>BIOPHYSICOCHEMICAL PROPERTIES</scope>
    <scope>SUBCELLULAR LOCATION</scope>
    <source>
        <strain>KSM-K16</strain>
    </source>
</reference>
<reference key="3">
    <citation type="journal article" date="1995" name="Acta Crystallogr. D">
        <title>Structure of a new alkaline serine protease (M-protease) from Bacillus sp. KSM-K16.</title>
        <authorList>
            <person name="Yamane T."/>
            <person name="Kani T."/>
            <person name="Hatanaka T."/>
            <person name="Suzuki A."/>
            <person name="Ashida T."/>
            <person name="Kobayashi T."/>
            <person name="Ito S."/>
            <person name="Yamashita O."/>
        </authorList>
    </citation>
    <scope>X-RAY CRYSTALLOGRAPHY (2.4 ANGSTROMS) OF 112-380 IN COMPLEX WITH CALCIUM</scope>
    <scope>COFACTOR</scope>
    <scope>SUBUNIT</scope>
</reference>
<keyword id="KW-0002">3D-structure</keyword>
<keyword id="KW-0106">Calcium</keyword>
<keyword id="KW-0903">Direct protein sequencing</keyword>
<keyword id="KW-0378">Hydrolase</keyword>
<keyword id="KW-0479">Metal-binding</keyword>
<keyword id="KW-0645">Protease</keyword>
<keyword id="KW-1185">Reference proteome</keyword>
<keyword id="KW-0964">Secreted</keyword>
<keyword id="KW-0720">Serine protease</keyword>
<keyword id="KW-0732">Signal</keyword>
<feature type="signal peptide" evidence="1">
    <location>
        <begin position="1"/>
        <end position="27"/>
    </location>
</feature>
<feature type="propeptide" id="PRO_0000027142" evidence="4">
    <location>
        <begin position="28"/>
        <end position="111"/>
    </location>
</feature>
<feature type="chain" id="PRO_0000027143" description="M-protease">
    <location>
        <begin position="112"/>
        <end position="380"/>
    </location>
</feature>
<feature type="domain" description="Inhibitor I9" evidence="1">
    <location>
        <begin position="34"/>
        <end position="111"/>
    </location>
</feature>
<feature type="domain" description="Peptidase S8" evidence="2">
    <location>
        <begin position="116"/>
        <end position="379"/>
    </location>
</feature>
<feature type="active site" description="Charge relay system" evidence="2">
    <location>
        <position position="143"/>
    </location>
</feature>
<feature type="active site" description="Charge relay system" evidence="2">
    <location>
        <position position="173"/>
    </location>
</feature>
<feature type="active site" description="Charge relay system" evidence="2">
    <location>
        <position position="326"/>
    </location>
</feature>
<feature type="binding site" evidence="3 8 9">
    <location>
        <position position="113"/>
    </location>
    <ligand>
        <name>Ca(2+)</name>
        <dbReference type="ChEBI" id="CHEBI:29108"/>
        <label>1</label>
    </ligand>
</feature>
<feature type="binding site" evidence="3 8 9">
    <location>
        <position position="151"/>
    </location>
    <ligand>
        <name>Ca(2+)</name>
        <dbReference type="ChEBI" id="CHEBI:29108"/>
        <label>1</label>
    </ligand>
</feature>
<feature type="binding site" evidence="3 8 9">
    <location>
        <position position="184"/>
    </location>
    <ligand>
        <name>Ca(2+)</name>
        <dbReference type="ChEBI" id="CHEBI:29108"/>
        <label>1</label>
    </ligand>
</feature>
<feature type="binding site" evidence="3 9">
    <location>
        <position position="186"/>
    </location>
    <ligand>
        <name>Ca(2+)</name>
        <dbReference type="ChEBI" id="CHEBI:29108"/>
        <label>1</label>
    </ligand>
</feature>
<feature type="binding site" evidence="3 8 9">
    <location>
        <position position="188"/>
    </location>
    <ligand>
        <name>Ca(2+)</name>
        <dbReference type="ChEBI" id="CHEBI:29108"/>
        <label>1</label>
    </ligand>
</feature>
<feature type="binding site" evidence="3 8 9">
    <location>
        <position position="190"/>
    </location>
    <ligand>
        <name>Ca(2+)</name>
        <dbReference type="ChEBI" id="CHEBI:29108"/>
        <label>1</label>
    </ligand>
</feature>
<feature type="binding site" evidence="3 8">
    <location>
        <position position="274"/>
    </location>
    <ligand>
        <name>Ca(2+)</name>
        <dbReference type="ChEBI" id="CHEBI:29108"/>
        <label>2</label>
    </ligand>
</feature>
<feature type="binding site" evidence="3 8">
    <location>
        <position position="276"/>
    </location>
    <ligand>
        <name>Ca(2+)</name>
        <dbReference type="ChEBI" id="CHEBI:29108"/>
        <label>2</label>
    </ligand>
</feature>
<feature type="binding site" evidence="3 8">
    <location>
        <position position="279"/>
    </location>
    <ligand>
        <name>Ca(2+)</name>
        <dbReference type="ChEBI" id="CHEBI:29108"/>
        <label>2</label>
    </ligand>
</feature>
<feature type="binding site" evidence="3 8">
    <location>
        <position position="302"/>
    </location>
    <ligand>
        <name>Ca(2+)</name>
        <dbReference type="ChEBI" id="CHEBI:29108"/>
        <label>2</label>
    </ligand>
</feature>
<feature type="helix" evidence="10">
    <location>
        <begin position="117"/>
        <end position="121"/>
    </location>
</feature>
<feature type="helix" evidence="10">
    <location>
        <begin position="124"/>
        <end position="129"/>
    </location>
</feature>
<feature type="strand" evidence="10">
    <location>
        <begin position="138"/>
        <end position="144"/>
    </location>
</feature>
<feature type="strand" evidence="10">
    <location>
        <begin position="154"/>
        <end position="159"/>
    </location>
</feature>
<feature type="strand" evidence="10">
    <location>
        <begin position="170"/>
        <end position="172"/>
    </location>
</feature>
<feature type="helix" evidence="10">
    <location>
        <begin position="173"/>
        <end position="182"/>
    </location>
</feature>
<feature type="strand" evidence="10">
    <location>
        <begin position="186"/>
        <end position="189"/>
    </location>
</feature>
<feature type="strand" evidence="10">
    <location>
        <begin position="198"/>
        <end position="203"/>
    </location>
</feature>
<feature type="helix" evidence="10">
    <location>
        <begin position="213"/>
        <end position="225"/>
    </location>
</feature>
<feature type="strand" evidence="10">
    <location>
        <begin position="229"/>
        <end position="233"/>
    </location>
</feature>
<feature type="strand" evidence="10">
    <location>
        <begin position="237"/>
        <end position="239"/>
    </location>
</feature>
<feature type="helix" evidence="10">
    <location>
        <begin position="242"/>
        <end position="254"/>
    </location>
</feature>
<feature type="strand" evidence="10">
    <location>
        <begin position="257"/>
        <end position="261"/>
    </location>
</feature>
<feature type="turn" evidence="10">
    <location>
        <begin position="273"/>
        <end position="275"/>
    </location>
</feature>
<feature type="strand" evidence="10">
    <location>
        <begin position="279"/>
        <end position="285"/>
    </location>
</feature>
<feature type="strand" evidence="10">
    <location>
        <begin position="289"/>
        <end position="291"/>
    </location>
</feature>
<feature type="strand" evidence="10">
    <location>
        <begin position="301"/>
        <end position="306"/>
    </location>
</feature>
<feature type="strand" evidence="10">
    <location>
        <begin position="308"/>
        <end position="314"/>
    </location>
</feature>
<feature type="turn" evidence="10">
    <location>
        <begin position="315"/>
        <end position="317"/>
    </location>
</feature>
<feature type="strand" evidence="10">
    <location>
        <begin position="318"/>
        <end position="322"/>
    </location>
</feature>
<feature type="helix" evidence="10">
    <location>
        <begin position="325"/>
        <end position="342"/>
    </location>
</feature>
<feature type="helix" evidence="10">
    <location>
        <begin position="348"/>
        <end position="358"/>
    </location>
</feature>
<feature type="helix" evidence="10">
    <location>
        <begin position="365"/>
        <end position="368"/>
    </location>
</feature>
<feature type="helix" evidence="10">
    <location>
        <begin position="375"/>
        <end position="378"/>
    </location>
</feature>
<name>PRTM_SHOC1</name>
<gene>
    <name type="primary">aprE</name>
    <name type="ordered locus">ABC0761</name>
</gene>
<comment type="function">
    <text evidence="4">Alkaline serine protease that cleaves various substrates, including N-succinyl-Ala-Ala-Pro-Phe-pNA, N-succinyl-Ala-Ala-Pro-MetpNA, oxidized insulin B chain, casein, hemoglobin and scleroproteins, such as keratin, alpha-keratin and elastin.</text>
</comment>
<comment type="cofactor">
    <cofactor evidence="3">
        <name>Ca(2+)</name>
        <dbReference type="ChEBI" id="CHEBI:29108"/>
    </cofactor>
    <text evidence="3">Binds 2 calcium ions per subunit.</text>
</comment>
<comment type="activity regulation">
    <text evidence="4">Activity is inhibited by phenylmethylsulfonyl fluoride and chymostatin.</text>
</comment>
<comment type="biophysicochemical properties">
    <kinetics>
        <KM evidence="4">0.8 mM for N-succinyl-Ala-Ala-Pro-Phe-pNA</KM>
        <KM evidence="4">1.01 mM for N-succinyl-Ala-Ala-Pro-Met-pNA</KM>
    </kinetics>
    <phDependence>
        <text evidence="4">Optimum pH is 12.3.</text>
    </phDependence>
    <temperatureDependence>
        <text evidence="4">Optimum temperature is 55 degrees Celsius. CaC1(2) markedly shifts the optimum temperature to 70 degrees Celsius.</text>
    </temperatureDependence>
</comment>
<comment type="subunit">
    <text evidence="3">Monomer.</text>
</comment>
<comment type="subcellular location">
    <subcellularLocation>
        <location evidence="7">Secreted</location>
    </subcellularLocation>
</comment>
<comment type="similarity">
    <text evidence="6">Belongs to the peptidase S8 family.</text>
</comment>
<proteinExistence type="evidence at protein level"/>